<protein>
    <recommendedName>
        <fullName evidence="1">Small ribosomal subunit protein bS6</fullName>
    </recommendedName>
    <alternativeName>
        <fullName evidence="2">30S ribosomal protein S6</fullName>
    </alternativeName>
</protein>
<sequence>MRTYEVMYIVRPNIEEDAKKALVERFNGILATEGAEVLEAKDWGKRRLAYEINDFKDGFYNIVRVKSDNNKATDEFQRLAKISDDIIRYMVIREDEDK</sequence>
<organism>
    <name type="scientific">Staphylococcus aureus (strain MRSA252)</name>
    <dbReference type="NCBI Taxonomy" id="282458"/>
    <lineage>
        <taxon>Bacteria</taxon>
        <taxon>Bacillati</taxon>
        <taxon>Bacillota</taxon>
        <taxon>Bacilli</taxon>
        <taxon>Bacillales</taxon>
        <taxon>Staphylococcaceae</taxon>
        <taxon>Staphylococcus</taxon>
    </lineage>
</organism>
<reference key="1">
    <citation type="journal article" date="2004" name="Proc. Natl. Acad. Sci. U.S.A.">
        <title>Complete genomes of two clinical Staphylococcus aureus strains: evidence for the rapid evolution of virulence and drug resistance.</title>
        <authorList>
            <person name="Holden M.T.G."/>
            <person name="Feil E.J."/>
            <person name="Lindsay J.A."/>
            <person name="Peacock S.J."/>
            <person name="Day N.P.J."/>
            <person name="Enright M.C."/>
            <person name="Foster T.J."/>
            <person name="Moore C.E."/>
            <person name="Hurst L."/>
            <person name="Atkin R."/>
            <person name="Barron A."/>
            <person name="Bason N."/>
            <person name="Bentley S.D."/>
            <person name="Chillingworth C."/>
            <person name="Chillingworth T."/>
            <person name="Churcher C."/>
            <person name="Clark L."/>
            <person name="Corton C."/>
            <person name="Cronin A."/>
            <person name="Doggett J."/>
            <person name="Dowd L."/>
            <person name="Feltwell T."/>
            <person name="Hance Z."/>
            <person name="Harris B."/>
            <person name="Hauser H."/>
            <person name="Holroyd S."/>
            <person name="Jagels K."/>
            <person name="James K.D."/>
            <person name="Lennard N."/>
            <person name="Line A."/>
            <person name="Mayes R."/>
            <person name="Moule S."/>
            <person name="Mungall K."/>
            <person name="Ormond D."/>
            <person name="Quail M.A."/>
            <person name="Rabbinowitsch E."/>
            <person name="Rutherford K.M."/>
            <person name="Sanders M."/>
            <person name="Sharp S."/>
            <person name="Simmonds M."/>
            <person name="Stevens K."/>
            <person name="Whitehead S."/>
            <person name="Barrell B.G."/>
            <person name="Spratt B.G."/>
            <person name="Parkhill J."/>
        </authorList>
    </citation>
    <scope>NUCLEOTIDE SEQUENCE [LARGE SCALE GENOMIC DNA]</scope>
    <source>
        <strain>MRSA252</strain>
    </source>
</reference>
<dbReference type="EMBL" id="BX571856">
    <property type="protein sequence ID" value="CAG39385.1"/>
    <property type="molecule type" value="Genomic_DNA"/>
</dbReference>
<dbReference type="RefSeq" id="WP_001261460.1">
    <property type="nucleotide sequence ID" value="NC_002952.2"/>
</dbReference>
<dbReference type="SMR" id="Q6GJV3"/>
<dbReference type="GeneID" id="98344691"/>
<dbReference type="KEGG" id="sar:SAR0362"/>
<dbReference type="HOGENOM" id="CLU_113441_5_3_9"/>
<dbReference type="Proteomes" id="UP000000596">
    <property type="component" value="Chromosome"/>
</dbReference>
<dbReference type="GO" id="GO:0005737">
    <property type="term" value="C:cytoplasm"/>
    <property type="evidence" value="ECO:0007669"/>
    <property type="project" value="UniProtKB-ARBA"/>
</dbReference>
<dbReference type="GO" id="GO:1990904">
    <property type="term" value="C:ribonucleoprotein complex"/>
    <property type="evidence" value="ECO:0007669"/>
    <property type="project" value="UniProtKB-KW"/>
</dbReference>
<dbReference type="GO" id="GO:0005840">
    <property type="term" value="C:ribosome"/>
    <property type="evidence" value="ECO:0007669"/>
    <property type="project" value="UniProtKB-KW"/>
</dbReference>
<dbReference type="GO" id="GO:0070181">
    <property type="term" value="F:small ribosomal subunit rRNA binding"/>
    <property type="evidence" value="ECO:0007669"/>
    <property type="project" value="TreeGrafter"/>
</dbReference>
<dbReference type="GO" id="GO:0003735">
    <property type="term" value="F:structural constituent of ribosome"/>
    <property type="evidence" value="ECO:0007669"/>
    <property type="project" value="InterPro"/>
</dbReference>
<dbReference type="GO" id="GO:0006412">
    <property type="term" value="P:translation"/>
    <property type="evidence" value="ECO:0007669"/>
    <property type="project" value="UniProtKB-UniRule"/>
</dbReference>
<dbReference type="CDD" id="cd00473">
    <property type="entry name" value="bS6"/>
    <property type="match status" value="1"/>
</dbReference>
<dbReference type="FunFam" id="3.30.70.60:FF:000002">
    <property type="entry name" value="30S ribosomal protein S6"/>
    <property type="match status" value="1"/>
</dbReference>
<dbReference type="Gene3D" id="3.30.70.60">
    <property type="match status" value="1"/>
</dbReference>
<dbReference type="HAMAP" id="MF_00360">
    <property type="entry name" value="Ribosomal_bS6"/>
    <property type="match status" value="1"/>
</dbReference>
<dbReference type="InterPro" id="IPR000529">
    <property type="entry name" value="Ribosomal_bS6"/>
</dbReference>
<dbReference type="InterPro" id="IPR020815">
    <property type="entry name" value="Ribosomal_bS6_CS"/>
</dbReference>
<dbReference type="InterPro" id="IPR035980">
    <property type="entry name" value="Ribosomal_bS6_sf"/>
</dbReference>
<dbReference type="InterPro" id="IPR020814">
    <property type="entry name" value="Ribosomal_S6_plastid/chlpt"/>
</dbReference>
<dbReference type="InterPro" id="IPR014717">
    <property type="entry name" value="Transl_elong_EF1B/ribsomal_bS6"/>
</dbReference>
<dbReference type="NCBIfam" id="TIGR00166">
    <property type="entry name" value="S6"/>
    <property type="match status" value="1"/>
</dbReference>
<dbReference type="PANTHER" id="PTHR21011">
    <property type="entry name" value="MITOCHONDRIAL 28S RIBOSOMAL PROTEIN S6"/>
    <property type="match status" value="1"/>
</dbReference>
<dbReference type="PANTHER" id="PTHR21011:SF1">
    <property type="entry name" value="SMALL RIBOSOMAL SUBUNIT PROTEIN BS6M"/>
    <property type="match status" value="1"/>
</dbReference>
<dbReference type="Pfam" id="PF01250">
    <property type="entry name" value="Ribosomal_S6"/>
    <property type="match status" value="1"/>
</dbReference>
<dbReference type="SUPFAM" id="SSF54995">
    <property type="entry name" value="Ribosomal protein S6"/>
    <property type="match status" value="1"/>
</dbReference>
<dbReference type="PROSITE" id="PS01048">
    <property type="entry name" value="RIBOSOMAL_S6"/>
    <property type="match status" value="1"/>
</dbReference>
<feature type="chain" id="PRO_0000176838" description="Small ribosomal subunit protein bS6">
    <location>
        <begin position="1"/>
        <end position="98"/>
    </location>
</feature>
<comment type="function">
    <text evidence="1">Binds together with bS18 to 16S ribosomal RNA.</text>
</comment>
<comment type="similarity">
    <text evidence="1">Belongs to the bacterial ribosomal protein bS6 family.</text>
</comment>
<proteinExistence type="inferred from homology"/>
<accession>Q6GJV3</accession>
<keyword id="KW-0687">Ribonucleoprotein</keyword>
<keyword id="KW-0689">Ribosomal protein</keyword>
<keyword id="KW-0694">RNA-binding</keyword>
<keyword id="KW-0699">rRNA-binding</keyword>
<evidence type="ECO:0000255" key="1">
    <source>
        <dbReference type="HAMAP-Rule" id="MF_00360"/>
    </source>
</evidence>
<evidence type="ECO:0000305" key="2"/>
<name>RS6_STAAR</name>
<gene>
    <name evidence="1" type="primary">rpsF</name>
    <name type="ordered locus">SAR0362</name>
</gene>